<evidence type="ECO:0000250" key="1"/>
<evidence type="ECO:0000250" key="2">
    <source>
        <dbReference type="UniProtKB" id="P32253"/>
    </source>
</evidence>
<evidence type="ECO:0000305" key="3"/>
<sequence>MSIKIKNFKKNIIINNNNFINENNCNNNNKNNIVQLCIMGDGGVGKTAVTTQFISNHFVYYYDPTIEDSYRKQICVSDKSYILDILDTAGQDELTAMRDQWIRSCEGFVLVYSITCKSSFNQVLNFREQIIRVLDRDDVPIMMIGNKSDLVNERQVTYHEGKELAQRLGMSFMEVSAKNRSNIDEVFHEAVCCVKRKEELYRIKSKHVKILKKNKNPLKKKINEICKVM</sequence>
<dbReference type="EC" id="3.6.5.2" evidence="2"/>
<dbReference type="EMBL" id="AAFI02000005">
    <property type="protein sequence ID" value="EAL72718.1"/>
    <property type="molecule type" value="Genomic_DNA"/>
</dbReference>
<dbReference type="RefSeq" id="XP_646562.1">
    <property type="nucleotide sequence ID" value="XM_641470.1"/>
</dbReference>
<dbReference type="SMR" id="Q55CB9"/>
<dbReference type="FunCoup" id="Q55CB9">
    <property type="interactions" value="1"/>
</dbReference>
<dbReference type="STRING" id="44689.Q55CB9"/>
<dbReference type="PaxDb" id="44689-DDB0229436"/>
<dbReference type="EnsemblProtists" id="EAL72718">
    <property type="protein sequence ID" value="EAL72718"/>
    <property type="gene ID" value="DDB_G0270736"/>
</dbReference>
<dbReference type="GeneID" id="8617530"/>
<dbReference type="KEGG" id="ddi:DDB_G0270736"/>
<dbReference type="dictyBase" id="DDB_G0270736">
    <property type="gene designation" value="rasV"/>
</dbReference>
<dbReference type="VEuPathDB" id="AmoebaDB:DDB_G0270736"/>
<dbReference type="eggNOG" id="KOG0395">
    <property type="taxonomic scope" value="Eukaryota"/>
</dbReference>
<dbReference type="HOGENOM" id="CLU_041217_9_8_1"/>
<dbReference type="InParanoid" id="Q55CB9"/>
<dbReference type="OMA" id="TYRKQAH"/>
<dbReference type="PhylomeDB" id="Q55CB9"/>
<dbReference type="PRO" id="PR:Q55CB9"/>
<dbReference type="Proteomes" id="UP000002195">
    <property type="component" value="Chromosome 1"/>
</dbReference>
<dbReference type="GO" id="GO:0005886">
    <property type="term" value="C:plasma membrane"/>
    <property type="evidence" value="ECO:0000318"/>
    <property type="project" value="GO_Central"/>
</dbReference>
<dbReference type="GO" id="GO:0003925">
    <property type="term" value="F:G protein activity"/>
    <property type="evidence" value="ECO:0007669"/>
    <property type="project" value="UniProtKB-EC"/>
</dbReference>
<dbReference type="GO" id="GO:0019003">
    <property type="term" value="F:GDP binding"/>
    <property type="evidence" value="ECO:0000318"/>
    <property type="project" value="GO_Central"/>
</dbReference>
<dbReference type="GO" id="GO:0005525">
    <property type="term" value="F:GTP binding"/>
    <property type="evidence" value="ECO:0000318"/>
    <property type="project" value="GO_Central"/>
</dbReference>
<dbReference type="GO" id="GO:0003924">
    <property type="term" value="F:GTPase activity"/>
    <property type="evidence" value="ECO:0000318"/>
    <property type="project" value="GO_Central"/>
</dbReference>
<dbReference type="GO" id="GO:0044351">
    <property type="term" value="P:macropinocytosis"/>
    <property type="evidence" value="ECO:0000316"/>
    <property type="project" value="dictyBase"/>
</dbReference>
<dbReference type="GO" id="GO:0007165">
    <property type="term" value="P:signal transduction"/>
    <property type="evidence" value="ECO:0007669"/>
    <property type="project" value="InterPro"/>
</dbReference>
<dbReference type="CDD" id="cd00876">
    <property type="entry name" value="Ras"/>
    <property type="match status" value="1"/>
</dbReference>
<dbReference type="FunFam" id="3.40.50.300:FF:000080">
    <property type="entry name" value="Ras-like GTPase Ras1"/>
    <property type="match status" value="1"/>
</dbReference>
<dbReference type="Gene3D" id="3.40.50.300">
    <property type="entry name" value="P-loop containing nucleotide triphosphate hydrolases"/>
    <property type="match status" value="1"/>
</dbReference>
<dbReference type="InterPro" id="IPR027417">
    <property type="entry name" value="P-loop_NTPase"/>
</dbReference>
<dbReference type="InterPro" id="IPR005225">
    <property type="entry name" value="Small_GTP-bd"/>
</dbReference>
<dbReference type="InterPro" id="IPR001806">
    <property type="entry name" value="Small_GTPase"/>
</dbReference>
<dbReference type="InterPro" id="IPR020849">
    <property type="entry name" value="Small_GTPase_Ras-type"/>
</dbReference>
<dbReference type="NCBIfam" id="TIGR00231">
    <property type="entry name" value="small_GTP"/>
    <property type="match status" value="1"/>
</dbReference>
<dbReference type="PANTHER" id="PTHR24070">
    <property type="entry name" value="RAS, DI-RAS, AND RHEB FAMILY MEMBERS OF SMALL GTPASE SUPERFAMILY"/>
    <property type="match status" value="1"/>
</dbReference>
<dbReference type="Pfam" id="PF00071">
    <property type="entry name" value="Ras"/>
    <property type="match status" value="1"/>
</dbReference>
<dbReference type="PRINTS" id="PR00449">
    <property type="entry name" value="RASTRNSFRMNG"/>
</dbReference>
<dbReference type="SMART" id="SM00175">
    <property type="entry name" value="RAB"/>
    <property type="match status" value="1"/>
</dbReference>
<dbReference type="SMART" id="SM00173">
    <property type="entry name" value="RAS"/>
    <property type="match status" value="1"/>
</dbReference>
<dbReference type="SMART" id="SM00174">
    <property type="entry name" value="RHO"/>
    <property type="match status" value="1"/>
</dbReference>
<dbReference type="SUPFAM" id="SSF52540">
    <property type="entry name" value="P-loop containing nucleoside triphosphate hydrolases"/>
    <property type="match status" value="1"/>
</dbReference>
<dbReference type="PROSITE" id="PS51421">
    <property type="entry name" value="RAS"/>
    <property type="match status" value="1"/>
</dbReference>
<organism>
    <name type="scientific">Dictyostelium discoideum</name>
    <name type="common">Social amoeba</name>
    <dbReference type="NCBI Taxonomy" id="44689"/>
    <lineage>
        <taxon>Eukaryota</taxon>
        <taxon>Amoebozoa</taxon>
        <taxon>Evosea</taxon>
        <taxon>Eumycetozoa</taxon>
        <taxon>Dictyostelia</taxon>
        <taxon>Dictyosteliales</taxon>
        <taxon>Dictyosteliaceae</taxon>
        <taxon>Dictyostelium</taxon>
    </lineage>
</organism>
<accession>Q55CB9</accession>
<proteinExistence type="inferred from homology"/>
<reference key="1">
    <citation type="journal article" date="2005" name="Nature">
        <title>The genome of the social amoeba Dictyostelium discoideum.</title>
        <authorList>
            <person name="Eichinger L."/>
            <person name="Pachebat J.A."/>
            <person name="Gloeckner G."/>
            <person name="Rajandream M.A."/>
            <person name="Sucgang R."/>
            <person name="Berriman M."/>
            <person name="Song J."/>
            <person name="Olsen R."/>
            <person name="Szafranski K."/>
            <person name="Xu Q."/>
            <person name="Tunggal B."/>
            <person name="Kummerfeld S."/>
            <person name="Madera M."/>
            <person name="Konfortov B.A."/>
            <person name="Rivero F."/>
            <person name="Bankier A.T."/>
            <person name="Lehmann R."/>
            <person name="Hamlin N."/>
            <person name="Davies R."/>
            <person name="Gaudet P."/>
            <person name="Fey P."/>
            <person name="Pilcher K."/>
            <person name="Chen G."/>
            <person name="Saunders D."/>
            <person name="Sodergren E.J."/>
            <person name="Davis P."/>
            <person name="Kerhornou A."/>
            <person name="Nie X."/>
            <person name="Hall N."/>
            <person name="Anjard C."/>
            <person name="Hemphill L."/>
            <person name="Bason N."/>
            <person name="Farbrother P."/>
            <person name="Desany B."/>
            <person name="Just E."/>
            <person name="Morio T."/>
            <person name="Rost R."/>
            <person name="Churcher C.M."/>
            <person name="Cooper J."/>
            <person name="Haydock S."/>
            <person name="van Driessche N."/>
            <person name="Cronin A."/>
            <person name="Goodhead I."/>
            <person name="Muzny D.M."/>
            <person name="Mourier T."/>
            <person name="Pain A."/>
            <person name="Lu M."/>
            <person name="Harper D."/>
            <person name="Lindsay R."/>
            <person name="Hauser H."/>
            <person name="James K.D."/>
            <person name="Quiles M."/>
            <person name="Madan Babu M."/>
            <person name="Saito T."/>
            <person name="Buchrieser C."/>
            <person name="Wardroper A."/>
            <person name="Felder M."/>
            <person name="Thangavelu M."/>
            <person name="Johnson D."/>
            <person name="Knights A."/>
            <person name="Loulseged H."/>
            <person name="Mungall K.L."/>
            <person name="Oliver K."/>
            <person name="Price C."/>
            <person name="Quail M.A."/>
            <person name="Urushihara H."/>
            <person name="Hernandez J."/>
            <person name="Rabbinowitsch E."/>
            <person name="Steffen D."/>
            <person name="Sanders M."/>
            <person name="Ma J."/>
            <person name="Kohara Y."/>
            <person name="Sharp S."/>
            <person name="Simmonds M.N."/>
            <person name="Spiegler S."/>
            <person name="Tivey A."/>
            <person name="Sugano S."/>
            <person name="White B."/>
            <person name="Walker D."/>
            <person name="Woodward J.R."/>
            <person name="Winckler T."/>
            <person name="Tanaka Y."/>
            <person name="Shaulsky G."/>
            <person name="Schleicher M."/>
            <person name="Weinstock G.M."/>
            <person name="Rosenthal A."/>
            <person name="Cox E.C."/>
            <person name="Chisholm R.L."/>
            <person name="Gibbs R.A."/>
            <person name="Loomis W.F."/>
            <person name="Platzer M."/>
            <person name="Kay R.R."/>
            <person name="Williams J.G."/>
            <person name="Dear P.H."/>
            <person name="Noegel A.A."/>
            <person name="Barrell B.G."/>
            <person name="Kuspa A."/>
        </authorList>
    </citation>
    <scope>NUCLEOTIDE SEQUENCE [LARGE SCALE GENOMIC DNA]</scope>
    <source>
        <strain>AX4</strain>
    </source>
</reference>
<protein>
    <recommendedName>
        <fullName>Ras-like protein rasV</fullName>
        <ecNumber evidence="2">3.6.5.2</ecNumber>
    </recommendedName>
</protein>
<name>RASV_DICDI</name>
<feature type="chain" id="PRO_0000365563" description="Ras-like protein rasV">
    <location>
        <begin position="1"/>
        <end position="226"/>
    </location>
</feature>
<feature type="propeptide" id="PRO_0000365564" description="Removed in mature form" evidence="1">
    <location>
        <begin position="227"/>
        <end position="229"/>
    </location>
</feature>
<feature type="short sequence motif" description="Effector region">
    <location>
        <begin position="62"/>
        <end position="70"/>
    </location>
</feature>
<feature type="binding site" evidence="1">
    <location>
        <begin position="40"/>
        <end position="47"/>
    </location>
    <ligand>
        <name>GTP</name>
        <dbReference type="ChEBI" id="CHEBI:37565"/>
    </ligand>
</feature>
<feature type="binding site" evidence="1">
    <location>
        <begin position="87"/>
        <end position="91"/>
    </location>
    <ligand>
        <name>GTP</name>
        <dbReference type="ChEBI" id="CHEBI:37565"/>
    </ligand>
</feature>
<feature type="binding site" evidence="1">
    <location>
        <begin position="146"/>
        <end position="149"/>
    </location>
    <ligand>
        <name>GTP</name>
        <dbReference type="ChEBI" id="CHEBI:37565"/>
    </ligand>
</feature>
<feature type="modified residue" description="Cysteine methyl ester" evidence="1">
    <location>
        <position position="226"/>
    </location>
</feature>
<feature type="lipid moiety-binding region" description="S-geranylgeranyl cysteine" evidence="1">
    <location>
        <position position="226"/>
    </location>
</feature>
<keyword id="KW-1003">Cell membrane</keyword>
<keyword id="KW-0342">GTP-binding</keyword>
<keyword id="KW-0378">Hydrolase</keyword>
<keyword id="KW-0449">Lipoprotein</keyword>
<keyword id="KW-0472">Membrane</keyword>
<keyword id="KW-0488">Methylation</keyword>
<keyword id="KW-0547">Nucleotide-binding</keyword>
<keyword id="KW-0636">Prenylation</keyword>
<keyword id="KW-1185">Reference proteome</keyword>
<gene>
    <name type="primary">rasV</name>
    <name type="ORF">DDB_G0270736</name>
</gene>
<comment type="function">
    <text evidence="2">Ras proteins bind GDP/GTP and possess intrinsic GTPase activity.</text>
</comment>
<comment type="catalytic activity">
    <reaction evidence="2">
        <text>GTP + H2O = GDP + phosphate + H(+)</text>
        <dbReference type="Rhea" id="RHEA:19669"/>
        <dbReference type="ChEBI" id="CHEBI:15377"/>
        <dbReference type="ChEBI" id="CHEBI:15378"/>
        <dbReference type="ChEBI" id="CHEBI:37565"/>
        <dbReference type="ChEBI" id="CHEBI:43474"/>
        <dbReference type="ChEBI" id="CHEBI:58189"/>
        <dbReference type="EC" id="3.6.5.2"/>
    </reaction>
</comment>
<comment type="subcellular location">
    <subcellularLocation>
        <location evidence="3">Cell membrane</location>
        <topology evidence="3">Lipid-anchor</topology>
        <orientation evidence="3">Cytoplasmic side</orientation>
    </subcellularLocation>
</comment>
<comment type="similarity">
    <text evidence="3">Belongs to the small GTPase superfamily. Ras family.</text>
</comment>